<reference key="1">
    <citation type="submission" date="1997-09" db="EMBL/GenBank/DDBJ databases">
        <title>Cloning and sequencing of urease gene cluster from a photosynthetic bacterium, Rhodobacter capsulatus.</title>
        <authorList>
            <person name="Kataoka K."/>
            <person name="Matsuura K."/>
            <person name="Kitamura M."/>
            <person name="Yamaguchi K."/>
            <person name="Takakuwa S."/>
            <person name="Suzuki S."/>
        </authorList>
    </citation>
    <scope>NUCLEOTIDE SEQUENCE [GENOMIC DNA]</scope>
    <source>
        <strain>ATCC 33303 / B10</strain>
    </source>
</reference>
<accession>Q9AQT0</accession>
<keyword id="KW-0143">Chaperone</keyword>
<keyword id="KW-0963">Cytoplasm</keyword>
<keyword id="KW-0342">GTP-binding</keyword>
<keyword id="KW-0996">Nickel insertion</keyword>
<keyword id="KW-0547">Nucleotide-binding</keyword>
<organism>
    <name type="scientific">Rhodobacter capsulatus</name>
    <name type="common">Rhodopseudomonas capsulata</name>
    <dbReference type="NCBI Taxonomy" id="1061"/>
    <lineage>
        <taxon>Bacteria</taxon>
        <taxon>Pseudomonadati</taxon>
        <taxon>Pseudomonadota</taxon>
        <taxon>Alphaproteobacteria</taxon>
        <taxon>Rhodobacterales</taxon>
        <taxon>Rhodobacter group</taxon>
        <taxon>Rhodobacter</taxon>
    </lineage>
</organism>
<protein>
    <recommendedName>
        <fullName evidence="1">Urease accessory protein UreG</fullName>
    </recommendedName>
</protein>
<proteinExistence type="inferred from homology"/>
<feature type="chain" id="PRO_0000347437" description="Urease accessory protein UreG">
    <location>
        <begin position="1"/>
        <end position="208"/>
    </location>
</feature>
<feature type="binding site" evidence="1">
    <location>
        <begin position="12"/>
        <end position="19"/>
    </location>
    <ligand>
        <name>GTP</name>
        <dbReference type="ChEBI" id="CHEBI:37565"/>
    </ligand>
</feature>
<gene>
    <name evidence="1" type="primary">ureG</name>
</gene>
<dbReference type="EMBL" id="AB006984">
    <property type="protein sequence ID" value="BAB21071.1"/>
    <property type="molecule type" value="Genomic_DNA"/>
</dbReference>
<dbReference type="RefSeq" id="WP_013066960.1">
    <property type="nucleotide sequence ID" value="NZ_VIBE01000002.1"/>
</dbReference>
<dbReference type="SMR" id="Q9AQT0"/>
<dbReference type="GeneID" id="31490136"/>
<dbReference type="OMA" id="KMRGDKP"/>
<dbReference type="GO" id="GO:0005737">
    <property type="term" value="C:cytoplasm"/>
    <property type="evidence" value="ECO:0007669"/>
    <property type="project" value="UniProtKB-SubCell"/>
</dbReference>
<dbReference type="GO" id="GO:0005525">
    <property type="term" value="F:GTP binding"/>
    <property type="evidence" value="ECO:0007669"/>
    <property type="project" value="UniProtKB-KW"/>
</dbReference>
<dbReference type="GO" id="GO:0003924">
    <property type="term" value="F:GTPase activity"/>
    <property type="evidence" value="ECO:0007669"/>
    <property type="project" value="InterPro"/>
</dbReference>
<dbReference type="GO" id="GO:0016151">
    <property type="term" value="F:nickel cation binding"/>
    <property type="evidence" value="ECO:0007669"/>
    <property type="project" value="UniProtKB-UniRule"/>
</dbReference>
<dbReference type="GO" id="GO:0043419">
    <property type="term" value="P:urea catabolic process"/>
    <property type="evidence" value="ECO:0007669"/>
    <property type="project" value="InterPro"/>
</dbReference>
<dbReference type="CDD" id="cd05540">
    <property type="entry name" value="UreG"/>
    <property type="match status" value="1"/>
</dbReference>
<dbReference type="Gene3D" id="3.40.50.300">
    <property type="entry name" value="P-loop containing nucleotide triphosphate hydrolases"/>
    <property type="match status" value="1"/>
</dbReference>
<dbReference type="HAMAP" id="MF_01389">
    <property type="entry name" value="UreG"/>
    <property type="match status" value="1"/>
</dbReference>
<dbReference type="InterPro" id="IPR003495">
    <property type="entry name" value="CobW/HypB/UreG_nucleotide-bd"/>
</dbReference>
<dbReference type="InterPro" id="IPR027417">
    <property type="entry name" value="P-loop_NTPase"/>
</dbReference>
<dbReference type="InterPro" id="IPR004400">
    <property type="entry name" value="UreG"/>
</dbReference>
<dbReference type="NCBIfam" id="TIGR00101">
    <property type="entry name" value="ureG"/>
    <property type="match status" value="1"/>
</dbReference>
<dbReference type="PANTHER" id="PTHR31715">
    <property type="entry name" value="UREASE ACCESSORY PROTEIN G"/>
    <property type="match status" value="1"/>
</dbReference>
<dbReference type="PANTHER" id="PTHR31715:SF0">
    <property type="entry name" value="UREASE ACCESSORY PROTEIN G"/>
    <property type="match status" value="1"/>
</dbReference>
<dbReference type="Pfam" id="PF02492">
    <property type="entry name" value="cobW"/>
    <property type="match status" value="1"/>
</dbReference>
<dbReference type="PIRSF" id="PIRSF005624">
    <property type="entry name" value="Ni-bind_GTPase"/>
    <property type="match status" value="1"/>
</dbReference>
<dbReference type="SUPFAM" id="SSF52540">
    <property type="entry name" value="P-loop containing nucleoside triphosphate hydrolases"/>
    <property type="match status" value="1"/>
</dbReference>
<name>UREG_RHOCA</name>
<comment type="function">
    <text evidence="1">Facilitates the functional incorporation of the urease nickel metallocenter. This process requires GTP hydrolysis, probably effectuated by UreG.</text>
</comment>
<comment type="subunit">
    <text evidence="1">Homodimer. UreD, UreF and UreG form a complex that acts as a GTP-hydrolysis-dependent molecular chaperone, activating the urease apoprotein by helping to assemble the nickel containing metallocenter of UreC. The UreE protein probably delivers the nickel.</text>
</comment>
<comment type="subcellular location">
    <subcellularLocation>
        <location evidence="1">Cytoplasm</location>
    </subcellularLocation>
</comment>
<comment type="similarity">
    <text evidence="1">Belongs to the SIMIBI class G3E GTPase family. UreG subfamily.</text>
</comment>
<sequence length="208" mass="21928">MTNGPLRVGIGGPVGAGKTTLTEQLCRALAGRLSMAVVTNDIYTREDAEALMRAQVLPADRIRGVETGGCPHTAIREDASINLAAIADLTRAHPDLELILIESGGDNLAATFSPELADLTIYVIDTAAGQDIPRKRGPGVTRSDLLVVNKTDLAPHVGVDPVLLEADTQRARGPRPYVMAQLRHGVGIDEIVAFLIREGGLEQASAPA</sequence>
<evidence type="ECO:0000255" key="1">
    <source>
        <dbReference type="HAMAP-Rule" id="MF_01389"/>
    </source>
</evidence>